<reference key="1">
    <citation type="journal article" date="2002" name="Nature">
        <title>Comparison of the genomes of two Xanthomonas pathogens with differing host specificities.</title>
        <authorList>
            <person name="da Silva A.C.R."/>
            <person name="Ferro J.A."/>
            <person name="Reinach F.C."/>
            <person name="Farah C.S."/>
            <person name="Furlan L.R."/>
            <person name="Quaggio R.B."/>
            <person name="Monteiro-Vitorello C.B."/>
            <person name="Van Sluys M.A."/>
            <person name="Almeida N.F. Jr."/>
            <person name="Alves L.M.C."/>
            <person name="do Amaral A.M."/>
            <person name="Bertolini M.C."/>
            <person name="Camargo L.E.A."/>
            <person name="Camarotte G."/>
            <person name="Cannavan F."/>
            <person name="Cardozo J."/>
            <person name="Chambergo F."/>
            <person name="Ciapina L.P."/>
            <person name="Cicarelli R.M.B."/>
            <person name="Coutinho L.L."/>
            <person name="Cursino-Santos J.R."/>
            <person name="El-Dorry H."/>
            <person name="Faria J.B."/>
            <person name="Ferreira A.J.S."/>
            <person name="Ferreira R.C.C."/>
            <person name="Ferro M.I.T."/>
            <person name="Formighieri E.F."/>
            <person name="Franco M.C."/>
            <person name="Greggio C.C."/>
            <person name="Gruber A."/>
            <person name="Katsuyama A.M."/>
            <person name="Kishi L.T."/>
            <person name="Leite R.P."/>
            <person name="Lemos E.G.M."/>
            <person name="Lemos M.V.F."/>
            <person name="Locali E.C."/>
            <person name="Machado M.A."/>
            <person name="Madeira A.M.B.N."/>
            <person name="Martinez-Rossi N.M."/>
            <person name="Martins E.C."/>
            <person name="Meidanis J."/>
            <person name="Menck C.F.M."/>
            <person name="Miyaki C.Y."/>
            <person name="Moon D.H."/>
            <person name="Moreira L.M."/>
            <person name="Novo M.T.M."/>
            <person name="Okura V.K."/>
            <person name="Oliveira M.C."/>
            <person name="Oliveira V.R."/>
            <person name="Pereira H.A."/>
            <person name="Rossi A."/>
            <person name="Sena J.A.D."/>
            <person name="Silva C."/>
            <person name="de Souza R.F."/>
            <person name="Spinola L.A.F."/>
            <person name="Takita M.A."/>
            <person name="Tamura R.E."/>
            <person name="Teixeira E.C."/>
            <person name="Tezza R.I.D."/>
            <person name="Trindade dos Santos M."/>
            <person name="Truffi D."/>
            <person name="Tsai S.M."/>
            <person name="White F.F."/>
            <person name="Setubal J.C."/>
            <person name="Kitajima J.P."/>
        </authorList>
    </citation>
    <scope>NUCLEOTIDE SEQUENCE [LARGE SCALE GENOMIC DNA]</scope>
    <source>
        <strain>306</strain>
    </source>
</reference>
<gene>
    <name type="ordered locus">XAC2917</name>
</gene>
<comment type="function">
    <text evidence="1">Could be a nuclease involved in processing of the 5'-end of pre-16S rRNA.</text>
</comment>
<comment type="subcellular location">
    <subcellularLocation>
        <location evidence="1">Cytoplasm</location>
    </subcellularLocation>
</comment>
<comment type="similarity">
    <text evidence="1">Belongs to the YqgF nuclease family.</text>
</comment>
<proteinExistence type="inferred from homology"/>
<accession>Q8PII0</accession>
<sequence>MPEAGAIRPDGTVLGFDVGSRRIGVAVGSALGAGARAVAVINVHANGPDWVALDRVHKQWRPDGLVVGDPLTLDDKDQPARKRAHAFARQLRERYALPVVLIDERSSSVEAAQRFARERADGRKRRRDAEALDAMAAAVIVERWLAAPDQATLLP</sequence>
<name>YQGF_XANAC</name>
<feature type="chain" id="PRO_0000172176" description="Putative pre-16S rRNA nuclease">
    <location>
        <begin position="1"/>
        <end position="155"/>
    </location>
</feature>
<protein>
    <recommendedName>
        <fullName evidence="1">Putative pre-16S rRNA nuclease</fullName>
        <ecNumber evidence="1">3.1.-.-</ecNumber>
    </recommendedName>
</protein>
<dbReference type="EC" id="3.1.-.-" evidence="1"/>
<dbReference type="EMBL" id="AE008923">
    <property type="protein sequence ID" value="AAM37762.1"/>
    <property type="molecule type" value="Genomic_DNA"/>
</dbReference>
<dbReference type="SMR" id="Q8PII0"/>
<dbReference type="KEGG" id="xac:XAC2917"/>
<dbReference type="eggNOG" id="COG0816">
    <property type="taxonomic scope" value="Bacteria"/>
</dbReference>
<dbReference type="HOGENOM" id="CLU_098240_3_2_6"/>
<dbReference type="Proteomes" id="UP000000576">
    <property type="component" value="Chromosome"/>
</dbReference>
<dbReference type="GO" id="GO:0005829">
    <property type="term" value="C:cytosol"/>
    <property type="evidence" value="ECO:0007669"/>
    <property type="project" value="TreeGrafter"/>
</dbReference>
<dbReference type="GO" id="GO:0004518">
    <property type="term" value="F:nuclease activity"/>
    <property type="evidence" value="ECO:0007669"/>
    <property type="project" value="UniProtKB-KW"/>
</dbReference>
<dbReference type="GO" id="GO:0000967">
    <property type="term" value="P:rRNA 5'-end processing"/>
    <property type="evidence" value="ECO:0007669"/>
    <property type="project" value="UniProtKB-UniRule"/>
</dbReference>
<dbReference type="CDD" id="cd16964">
    <property type="entry name" value="YqgF"/>
    <property type="match status" value="1"/>
</dbReference>
<dbReference type="FunFam" id="3.30.420.140:FF:000010">
    <property type="entry name" value="Putative pre-16S rRNA nuclease"/>
    <property type="match status" value="1"/>
</dbReference>
<dbReference type="Gene3D" id="3.30.420.140">
    <property type="entry name" value="YqgF/RNase H-like domain"/>
    <property type="match status" value="1"/>
</dbReference>
<dbReference type="HAMAP" id="MF_00651">
    <property type="entry name" value="Nuclease_YqgF"/>
    <property type="match status" value="1"/>
</dbReference>
<dbReference type="InterPro" id="IPR012337">
    <property type="entry name" value="RNaseH-like_sf"/>
</dbReference>
<dbReference type="InterPro" id="IPR005227">
    <property type="entry name" value="YqgF"/>
</dbReference>
<dbReference type="InterPro" id="IPR006641">
    <property type="entry name" value="YqgF/RNaseH-like_dom"/>
</dbReference>
<dbReference type="InterPro" id="IPR037027">
    <property type="entry name" value="YqgF/RNaseH-like_dom_sf"/>
</dbReference>
<dbReference type="NCBIfam" id="TIGR00250">
    <property type="entry name" value="RNAse_H_YqgF"/>
    <property type="match status" value="1"/>
</dbReference>
<dbReference type="PANTHER" id="PTHR33317">
    <property type="entry name" value="POLYNUCLEOTIDYL TRANSFERASE, RIBONUCLEASE H-LIKE SUPERFAMILY PROTEIN"/>
    <property type="match status" value="1"/>
</dbReference>
<dbReference type="PANTHER" id="PTHR33317:SF4">
    <property type="entry name" value="POLYNUCLEOTIDYL TRANSFERASE, RIBONUCLEASE H-LIKE SUPERFAMILY PROTEIN"/>
    <property type="match status" value="1"/>
</dbReference>
<dbReference type="Pfam" id="PF03652">
    <property type="entry name" value="RuvX"/>
    <property type="match status" value="1"/>
</dbReference>
<dbReference type="SMART" id="SM00732">
    <property type="entry name" value="YqgFc"/>
    <property type="match status" value="1"/>
</dbReference>
<dbReference type="SUPFAM" id="SSF53098">
    <property type="entry name" value="Ribonuclease H-like"/>
    <property type="match status" value="1"/>
</dbReference>
<organism>
    <name type="scientific">Xanthomonas axonopodis pv. citri (strain 306)</name>
    <dbReference type="NCBI Taxonomy" id="190486"/>
    <lineage>
        <taxon>Bacteria</taxon>
        <taxon>Pseudomonadati</taxon>
        <taxon>Pseudomonadota</taxon>
        <taxon>Gammaproteobacteria</taxon>
        <taxon>Lysobacterales</taxon>
        <taxon>Lysobacteraceae</taxon>
        <taxon>Xanthomonas</taxon>
    </lineage>
</organism>
<keyword id="KW-0963">Cytoplasm</keyword>
<keyword id="KW-0378">Hydrolase</keyword>
<keyword id="KW-0540">Nuclease</keyword>
<keyword id="KW-0690">Ribosome biogenesis</keyword>
<evidence type="ECO:0000255" key="1">
    <source>
        <dbReference type="HAMAP-Rule" id="MF_00651"/>
    </source>
</evidence>